<keyword id="KW-0479">Metal-binding</keyword>
<keyword id="KW-1185">Reference proteome</keyword>
<keyword id="KW-0862">Zinc</keyword>
<accession>A8GZJ9</accession>
<proteinExistence type="inferred from homology"/>
<organism>
    <name type="scientific">Shewanella pealeana (strain ATCC 700345 / ANG-SQ1)</name>
    <dbReference type="NCBI Taxonomy" id="398579"/>
    <lineage>
        <taxon>Bacteria</taxon>
        <taxon>Pseudomonadati</taxon>
        <taxon>Pseudomonadota</taxon>
        <taxon>Gammaproteobacteria</taxon>
        <taxon>Alteromonadales</taxon>
        <taxon>Shewanellaceae</taxon>
        <taxon>Shewanella</taxon>
    </lineage>
</organism>
<feature type="chain" id="PRO_1000082729" description="DNA gyrase inhibitor YacG">
    <location>
        <begin position="1"/>
        <end position="79"/>
    </location>
</feature>
<feature type="binding site" evidence="1">
    <location>
        <position position="7"/>
    </location>
    <ligand>
        <name>Zn(2+)</name>
        <dbReference type="ChEBI" id="CHEBI:29105"/>
    </ligand>
</feature>
<feature type="binding site" evidence="1">
    <location>
        <position position="10"/>
    </location>
    <ligand>
        <name>Zn(2+)</name>
        <dbReference type="ChEBI" id="CHEBI:29105"/>
    </ligand>
</feature>
<feature type="binding site" evidence="1">
    <location>
        <position position="26"/>
    </location>
    <ligand>
        <name>Zn(2+)</name>
        <dbReference type="ChEBI" id="CHEBI:29105"/>
    </ligand>
</feature>
<feature type="binding site" evidence="1">
    <location>
        <position position="30"/>
    </location>
    <ligand>
        <name>Zn(2+)</name>
        <dbReference type="ChEBI" id="CHEBI:29105"/>
    </ligand>
</feature>
<dbReference type="EMBL" id="CP000851">
    <property type="protein sequence ID" value="ABV85736.1"/>
    <property type="molecule type" value="Genomic_DNA"/>
</dbReference>
<dbReference type="RefSeq" id="WP_012153674.1">
    <property type="nucleotide sequence ID" value="NC_009901.1"/>
</dbReference>
<dbReference type="SMR" id="A8GZJ9"/>
<dbReference type="STRING" id="398579.Spea_0408"/>
<dbReference type="KEGG" id="spl:Spea_0408"/>
<dbReference type="eggNOG" id="COG3024">
    <property type="taxonomic scope" value="Bacteria"/>
</dbReference>
<dbReference type="HOGENOM" id="CLU_178280_1_0_6"/>
<dbReference type="OrthoDB" id="9809663at2"/>
<dbReference type="Proteomes" id="UP000002608">
    <property type="component" value="Chromosome"/>
</dbReference>
<dbReference type="GO" id="GO:0008657">
    <property type="term" value="F:DNA topoisomerase type II (double strand cut, ATP-hydrolyzing) inhibitor activity"/>
    <property type="evidence" value="ECO:0007669"/>
    <property type="project" value="UniProtKB-UniRule"/>
</dbReference>
<dbReference type="GO" id="GO:0008270">
    <property type="term" value="F:zinc ion binding"/>
    <property type="evidence" value="ECO:0007669"/>
    <property type="project" value="UniProtKB-UniRule"/>
</dbReference>
<dbReference type="GO" id="GO:0006355">
    <property type="term" value="P:regulation of DNA-templated transcription"/>
    <property type="evidence" value="ECO:0007669"/>
    <property type="project" value="InterPro"/>
</dbReference>
<dbReference type="Gene3D" id="3.30.50.10">
    <property type="entry name" value="Erythroid Transcription Factor GATA-1, subunit A"/>
    <property type="match status" value="1"/>
</dbReference>
<dbReference type="HAMAP" id="MF_00649">
    <property type="entry name" value="DNA_gyrase_inhibitor_YacG"/>
    <property type="match status" value="1"/>
</dbReference>
<dbReference type="InterPro" id="IPR005584">
    <property type="entry name" value="DNA_gyrase_inhibitor_YacG"/>
</dbReference>
<dbReference type="InterPro" id="IPR013088">
    <property type="entry name" value="Znf_NHR/GATA"/>
</dbReference>
<dbReference type="NCBIfam" id="NF001638">
    <property type="entry name" value="PRK00418.1"/>
    <property type="match status" value="1"/>
</dbReference>
<dbReference type="PANTHER" id="PTHR36150">
    <property type="entry name" value="DNA GYRASE INHIBITOR YACG"/>
    <property type="match status" value="1"/>
</dbReference>
<dbReference type="PANTHER" id="PTHR36150:SF1">
    <property type="entry name" value="DNA GYRASE INHIBITOR YACG"/>
    <property type="match status" value="1"/>
</dbReference>
<dbReference type="Pfam" id="PF03884">
    <property type="entry name" value="YacG"/>
    <property type="match status" value="1"/>
</dbReference>
<dbReference type="SUPFAM" id="SSF57716">
    <property type="entry name" value="Glucocorticoid receptor-like (DNA-binding domain)"/>
    <property type="match status" value="1"/>
</dbReference>
<sequence length="79" mass="9030">MSLTVKCPTCQTPVTWNAEAEFKPFCSERCKLIDLGDWASEKNAIPVKPEFAPELLDQLGYDDADFFLDNNPFEDDKNR</sequence>
<evidence type="ECO:0000255" key="1">
    <source>
        <dbReference type="HAMAP-Rule" id="MF_00649"/>
    </source>
</evidence>
<protein>
    <recommendedName>
        <fullName evidence="1">DNA gyrase inhibitor YacG</fullName>
    </recommendedName>
</protein>
<name>YACG_SHEPA</name>
<reference key="1">
    <citation type="submission" date="2007-10" db="EMBL/GenBank/DDBJ databases">
        <title>Complete sequence of Shewanella pealeana ATCC 700345.</title>
        <authorList>
            <consortium name="US DOE Joint Genome Institute"/>
            <person name="Copeland A."/>
            <person name="Lucas S."/>
            <person name="Lapidus A."/>
            <person name="Barry K."/>
            <person name="Glavina del Rio T."/>
            <person name="Dalin E."/>
            <person name="Tice H."/>
            <person name="Pitluck S."/>
            <person name="Chertkov O."/>
            <person name="Brettin T."/>
            <person name="Bruce D."/>
            <person name="Detter J.C."/>
            <person name="Han C."/>
            <person name="Schmutz J."/>
            <person name="Larimer F."/>
            <person name="Land M."/>
            <person name="Hauser L."/>
            <person name="Kyrpides N."/>
            <person name="Kim E."/>
            <person name="Zhao J.-S.Z."/>
            <person name="Manno D."/>
            <person name="Hawari J."/>
            <person name="Richardson P."/>
        </authorList>
    </citation>
    <scope>NUCLEOTIDE SEQUENCE [LARGE SCALE GENOMIC DNA]</scope>
    <source>
        <strain>ATCC 700345 / ANG-SQ1</strain>
    </source>
</reference>
<comment type="function">
    <text evidence="1">Inhibits all the catalytic activities of DNA gyrase by preventing its interaction with DNA. Acts by binding directly to the C-terminal domain of GyrB, which probably disrupts DNA binding by the gyrase.</text>
</comment>
<comment type="cofactor">
    <cofactor evidence="1">
        <name>Zn(2+)</name>
        <dbReference type="ChEBI" id="CHEBI:29105"/>
    </cofactor>
    <text evidence="1">Binds 1 zinc ion.</text>
</comment>
<comment type="subunit">
    <text evidence="1">Interacts with GyrB.</text>
</comment>
<comment type="similarity">
    <text evidence="1">Belongs to the DNA gyrase inhibitor YacG family.</text>
</comment>
<gene>
    <name evidence="1" type="primary">yacG</name>
    <name type="ordered locus">Spea_0408</name>
</gene>